<sequence length="596" mass="65291">MTKAYNIIHHKFDVVVVGAGGAGLRSAFGMAKEGLNTACITKLFPTRSHTVAAQGGISAALGNMGEDDWRWHMYDTVKGSDWLGDQDAIEYMCKNAPDAILELEHYGVPFSRTEEGKIYQRPFGGMTTEYGKGKAAQRTCAAADRTGHAILHTLYQQSLKHKVQFFVEYFAIDLLMEDGECRGVVAWNLDDGSLHCFRAHNVVLATGGYGRAYFSATSAHTCTGDGGGMAIRAGLPLQDMEFVQFHPTGIYSAGCLITEGARGEGGYLVNANGERFMERYAPAAKDLASRDVVSRAMTIEIREGRGVGEHKDHVFLHLNHLSPEILHSRLPGISETAKIFAGVDVTKEPIPVLPTVHYNMGGIPTNYHGQVIIKDGKNHNSVVKGLMAIGEAACVSVHGANRLGSNSLLDLVVFGRSSALKAAELIKPASPHRSIKEESLEKIINRFDKVRHANGNILVAELRLKMQRTMQSHASVFRTQEVLDEGAGMISEIRSGYKDIKINDKSLIWNSDLVEALELDNLLDQALVTVYSAAARKESRGAHAREDYPDRNDEDWMKHTLSSIDEAGKVVLDYKPVTLTTLTDEVTAVPPVKRVY</sequence>
<proteinExistence type="inferred from homology"/>
<evidence type="ECO:0000250" key="1">
    <source>
        <dbReference type="UniProtKB" id="P0AC41"/>
    </source>
</evidence>
<evidence type="ECO:0000305" key="2"/>
<gene>
    <name type="primary">sdhA</name>
    <name type="ordered locus">RC0170</name>
</gene>
<organism>
    <name type="scientific">Rickettsia conorii (strain ATCC VR-613 / Malish 7)</name>
    <dbReference type="NCBI Taxonomy" id="272944"/>
    <lineage>
        <taxon>Bacteria</taxon>
        <taxon>Pseudomonadati</taxon>
        <taxon>Pseudomonadota</taxon>
        <taxon>Alphaproteobacteria</taxon>
        <taxon>Rickettsiales</taxon>
        <taxon>Rickettsiaceae</taxon>
        <taxon>Rickettsieae</taxon>
        <taxon>Rickettsia</taxon>
        <taxon>spotted fever group</taxon>
    </lineage>
</organism>
<name>SDHA_RICCN</name>
<comment type="catalytic activity">
    <reaction evidence="1">
        <text>a quinone + succinate = fumarate + a quinol</text>
        <dbReference type="Rhea" id="RHEA:40523"/>
        <dbReference type="ChEBI" id="CHEBI:24646"/>
        <dbReference type="ChEBI" id="CHEBI:29806"/>
        <dbReference type="ChEBI" id="CHEBI:30031"/>
        <dbReference type="ChEBI" id="CHEBI:132124"/>
        <dbReference type="EC" id="1.3.5.1"/>
    </reaction>
</comment>
<comment type="cofactor">
    <cofactor evidence="1">
        <name>FAD</name>
        <dbReference type="ChEBI" id="CHEBI:57692"/>
    </cofactor>
</comment>
<comment type="pathway">
    <text evidence="1">Carbohydrate metabolism; tricarboxylic acid cycle; fumarate from succinate (bacterial route): step 1/1.</text>
</comment>
<comment type="subunit">
    <text evidence="1">Part of an enzyme complex containing four subunits: a flavoprotein, an iron-sulfur, cytochrome b-556, and a hydrophobic anchor protein.</text>
</comment>
<comment type="subcellular location">
    <subcellularLocation>
        <location evidence="1">Cell inner membrane</location>
        <topology evidence="1">Peripheral membrane protein</topology>
        <orientation evidence="1">Cytoplasmic side</orientation>
    </subcellularLocation>
</comment>
<comment type="similarity">
    <text evidence="2">Belongs to the FAD-dependent oxidoreductase 2 family. FRD/SDH subfamily.</text>
</comment>
<accession>Q92J97</accession>
<reference key="1">
    <citation type="journal article" date="2001" name="Science">
        <title>Mechanisms of evolution in Rickettsia conorii and R. prowazekii.</title>
        <authorList>
            <person name="Ogata H."/>
            <person name="Audic S."/>
            <person name="Renesto-Audiffren P."/>
            <person name="Fournier P.-E."/>
            <person name="Barbe V."/>
            <person name="Samson D."/>
            <person name="Roux V."/>
            <person name="Cossart P."/>
            <person name="Weissenbach J."/>
            <person name="Claverie J.-M."/>
            <person name="Raoult D."/>
        </authorList>
    </citation>
    <scope>NUCLEOTIDE SEQUENCE [LARGE SCALE GENOMIC DNA]</scope>
    <source>
        <strain>ATCC VR-613 / Malish 7</strain>
    </source>
</reference>
<keyword id="KW-0997">Cell inner membrane</keyword>
<keyword id="KW-1003">Cell membrane</keyword>
<keyword id="KW-0249">Electron transport</keyword>
<keyword id="KW-0274">FAD</keyword>
<keyword id="KW-0285">Flavoprotein</keyword>
<keyword id="KW-0472">Membrane</keyword>
<keyword id="KW-0560">Oxidoreductase</keyword>
<keyword id="KW-0813">Transport</keyword>
<keyword id="KW-0816">Tricarboxylic acid cycle</keyword>
<feature type="chain" id="PRO_0000158656" description="Succinate dehydrogenase flavoprotein subunit">
    <location>
        <begin position="1"/>
        <end position="596"/>
    </location>
</feature>
<feature type="active site" description="Proton acceptor" evidence="1">
    <location>
        <position position="290"/>
    </location>
</feature>
<feature type="binding site" evidence="1">
    <location>
        <begin position="18"/>
        <end position="23"/>
    </location>
    <ligand>
        <name>FAD</name>
        <dbReference type="ChEBI" id="CHEBI:57692"/>
    </ligand>
</feature>
<feature type="binding site" evidence="1">
    <location>
        <begin position="41"/>
        <end position="56"/>
    </location>
    <ligand>
        <name>FAD</name>
        <dbReference type="ChEBI" id="CHEBI:57692"/>
    </ligand>
</feature>
<feature type="binding site" evidence="1">
    <location>
        <position position="225"/>
    </location>
    <ligand>
        <name>FAD</name>
        <dbReference type="ChEBI" id="CHEBI:57692"/>
    </ligand>
</feature>
<feature type="binding site" evidence="1">
    <location>
        <position position="246"/>
    </location>
    <ligand>
        <name>substrate</name>
    </ligand>
</feature>
<feature type="binding site" evidence="1">
    <location>
        <position position="258"/>
    </location>
    <ligand>
        <name>substrate</name>
    </ligand>
</feature>
<feature type="binding site" evidence="1">
    <location>
        <position position="357"/>
    </location>
    <ligand>
        <name>substrate</name>
    </ligand>
</feature>
<feature type="binding site" evidence="1">
    <location>
        <position position="391"/>
    </location>
    <ligand>
        <name>FAD</name>
        <dbReference type="ChEBI" id="CHEBI:57692"/>
    </ligand>
</feature>
<feature type="binding site" evidence="1">
    <location>
        <position position="402"/>
    </location>
    <ligand>
        <name>substrate</name>
    </ligand>
</feature>
<feature type="binding site" evidence="1">
    <location>
        <begin position="407"/>
        <end position="408"/>
    </location>
    <ligand>
        <name>FAD</name>
        <dbReference type="ChEBI" id="CHEBI:57692"/>
    </ligand>
</feature>
<feature type="modified residue" description="Tele-8alpha-FAD histidine" evidence="1">
    <location>
        <position position="49"/>
    </location>
</feature>
<protein>
    <recommendedName>
        <fullName>Succinate dehydrogenase flavoprotein subunit</fullName>
        <ecNumber evidence="1">1.3.5.1</ecNumber>
    </recommendedName>
</protein>
<dbReference type="EC" id="1.3.5.1" evidence="1"/>
<dbReference type="EMBL" id="AE006914">
    <property type="protein sequence ID" value="AAL02708.1"/>
    <property type="molecule type" value="Genomic_DNA"/>
</dbReference>
<dbReference type="PIR" id="B97721">
    <property type="entry name" value="B97721"/>
</dbReference>
<dbReference type="RefSeq" id="WP_010976845.1">
    <property type="nucleotide sequence ID" value="NC_003103.1"/>
</dbReference>
<dbReference type="SMR" id="Q92J97"/>
<dbReference type="GeneID" id="928018"/>
<dbReference type="KEGG" id="rco:RC0170"/>
<dbReference type="PATRIC" id="fig|272944.4.peg.199"/>
<dbReference type="HOGENOM" id="CLU_014312_6_1_5"/>
<dbReference type="UniPathway" id="UPA00223">
    <property type="reaction ID" value="UER01005"/>
</dbReference>
<dbReference type="Proteomes" id="UP000000816">
    <property type="component" value="Chromosome"/>
</dbReference>
<dbReference type="GO" id="GO:0005886">
    <property type="term" value="C:plasma membrane"/>
    <property type="evidence" value="ECO:0007669"/>
    <property type="project" value="UniProtKB-SubCell"/>
</dbReference>
<dbReference type="GO" id="GO:0009055">
    <property type="term" value="F:electron transfer activity"/>
    <property type="evidence" value="ECO:0007669"/>
    <property type="project" value="TreeGrafter"/>
</dbReference>
<dbReference type="GO" id="GO:0050660">
    <property type="term" value="F:flavin adenine dinucleotide binding"/>
    <property type="evidence" value="ECO:0007669"/>
    <property type="project" value="InterPro"/>
</dbReference>
<dbReference type="GO" id="GO:0008177">
    <property type="term" value="F:succinate dehydrogenase (quinone) activity"/>
    <property type="evidence" value="ECO:0007669"/>
    <property type="project" value="UniProtKB-EC"/>
</dbReference>
<dbReference type="GO" id="GO:0022900">
    <property type="term" value="P:electron transport chain"/>
    <property type="evidence" value="ECO:0007669"/>
    <property type="project" value="InterPro"/>
</dbReference>
<dbReference type="GO" id="GO:0006099">
    <property type="term" value="P:tricarboxylic acid cycle"/>
    <property type="evidence" value="ECO:0007669"/>
    <property type="project" value="UniProtKB-UniPathway"/>
</dbReference>
<dbReference type="FunFam" id="3.90.700.10:FF:000001">
    <property type="entry name" value="Mitochondrial succinate dehydrogenase flavoprotein subunit"/>
    <property type="match status" value="1"/>
</dbReference>
<dbReference type="FunFam" id="4.10.80.40:FF:000002">
    <property type="entry name" value="Succinate dehydrogenase [ubiquinone] flavoprotein subunit, mitochondrial"/>
    <property type="match status" value="1"/>
</dbReference>
<dbReference type="FunFam" id="3.50.50.60:FF:000026">
    <property type="entry name" value="Succinate dehydrogenase flavoprotein subunit"/>
    <property type="match status" value="1"/>
</dbReference>
<dbReference type="FunFam" id="1.20.58.100:FF:000001">
    <property type="entry name" value="Succinate dehydrogenase flavoprotein subunit (SdhA)"/>
    <property type="match status" value="1"/>
</dbReference>
<dbReference type="Gene3D" id="3.50.50.60">
    <property type="entry name" value="FAD/NAD(P)-binding domain"/>
    <property type="match status" value="1"/>
</dbReference>
<dbReference type="Gene3D" id="1.20.58.100">
    <property type="entry name" value="Fumarate reductase/succinate dehydrogenase flavoprotein-like, C-terminal domain"/>
    <property type="match status" value="1"/>
</dbReference>
<dbReference type="Gene3D" id="4.10.80.40">
    <property type="entry name" value="succinate dehydrogenase protein domain"/>
    <property type="match status" value="1"/>
</dbReference>
<dbReference type="Gene3D" id="3.90.700.10">
    <property type="entry name" value="Succinate dehydrogenase/fumarate reductase flavoprotein, catalytic domain"/>
    <property type="match status" value="1"/>
</dbReference>
<dbReference type="InterPro" id="IPR003953">
    <property type="entry name" value="FAD-dep_OxRdtase_2_FAD-bd"/>
</dbReference>
<dbReference type="InterPro" id="IPR036188">
    <property type="entry name" value="FAD/NAD-bd_sf"/>
</dbReference>
<dbReference type="InterPro" id="IPR003952">
    <property type="entry name" value="FRD_SDH_FAD_BS"/>
</dbReference>
<dbReference type="InterPro" id="IPR037099">
    <property type="entry name" value="Fum_R/Succ_DH_flav-like_C_sf"/>
</dbReference>
<dbReference type="InterPro" id="IPR015939">
    <property type="entry name" value="Fum_Rdtase/Succ_DH_flav-like_C"/>
</dbReference>
<dbReference type="InterPro" id="IPR030664">
    <property type="entry name" value="SdhA/FrdA/AprA"/>
</dbReference>
<dbReference type="InterPro" id="IPR027477">
    <property type="entry name" value="Succ_DH/fumarate_Rdtase_cat_sf"/>
</dbReference>
<dbReference type="InterPro" id="IPR011281">
    <property type="entry name" value="Succ_DH_flav_su_fwd"/>
</dbReference>
<dbReference type="InterPro" id="IPR014006">
    <property type="entry name" value="Succ_Dhase_FrdA_Gneg"/>
</dbReference>
<dbReference type="NCBIfam" id="TIGR01816">
    <property type="entry name" value="sdhA_forward"/>
    <property type="match status" value="1"/>
</dbReference>
<dbReference type="NCBIfam" id="TIGR01812">
    <property type="entry name" value="sdhA_frdA_Gneg"/>
    <property type="match status" value="1"/>
</dbReference>
<dbReference type="PANTHER" id="PTHR11632">
    <property type="entry name" value="SUCCINATE DEHYDROGENASE 2 FLAVOPROTEIN SUBUNIT"/>
    <property type="match status" value="1"/>
</dbReference>
<dbReference type="PANTHER" id="PTHR11632:SF51">
    <property type="entry name" value="SUCCINATE DEHYDROGENASE [UBIQUINONE] FLAVOPROTEIN SUBUNIT, MITOCHONDRIAL"/>
    <property type="match status" value="1"/>
</dbReference>
<dbReference type="Pfam" id="PF00890">
    <property type="entry name" value="FAD_binding_2"/>
    <property type="match status" value="1"/>
</dbReference>
<dbReference type="Pfam" id="PF02910">
    <property type="entry name" value="Succ_DH_flav_C"/>
    <property type="match status" value="1"/>
</dbReference>
<dbReference type="PIRSF" id="PIRSF000171">
    <property type="entry name" value="SDHA_APRA_LASPO"/>
    <property type="match status" value="1"/>
</dbReference>
<dbReference type="SUPFAM" id="SSF51905">
    <property type="entry name" value="FAD/NAD(P)-binding domain"/>
    <property type="match status" value="1"/>
</dbReference>
<dbReference type="SUPFAM" id="SSF46977">
    <property type="entry name" value="Succinate dehydrogenase/fumarate reductase flavoprotein C-terminal domain"/>
    <property type="match status" value="1"/>
</dbReference>
<dbReference type="SUPFAM" id="SSF56425">
    <property type="entry name" value="Succinate dehydrogenase/fumarate reductase flavoprotein, catalytic domain"/>
    <property type="match status" value="1"/>
</dbReference>
<dbReference type="PROSITE" id="PS00504">
    <property type="entry name" value="FRD_SDH_FAD_BINDING"/>
    <property type="match status" value="1"/>
</dbReference>